<organism>
    <name type="scientific">Gloeothece citriformis (strain PCC 7424)</name>
    <name type="common">Cyanothece sp. (strain PCC 7424)</name>
    <dbReference type="NCBI Taxonomy" id="65393"/>
    <lineage>
        <taxon>Bacteria</taxon>
        <taxon>Bacillati</taxon>
        <taxon>Cyanobacteriota</taxon>
        <taxon>Cyanophyceae</taxon>
        <taxon>Oscillatoriophycideae</taxon>
        <taxon>Chroococcales</taxon>
        <taxon>Aphanothecaceae</taxon>
        <taxon>Gloeothece</taxon>
        <taxon>Gloeothece citriformis</taxon>
    </lineage>
</organism>
<gene>
    <name evidence="1" type="primary">argC</name>
    <name type="ordered locus">PCC7424_2047</name>
</gene>
<proteinExistence type="inferred from homology"/>
<accession>B7KF19</accession>
<evidence type="ECO:0000255" key="1">
    <source>
        <dbReference type="HAMAP-Rule" id="MF_00150"/>
    </source>
</evidence>
<dbReference type="EC" id="1.2.1.38" evidence="1"/>
<dbReference type="EMBL" id="CP001291">
    <property type="protein sequence ID" value="ACK70475.1"/>
    <property type="molecule type" value="Genomic_DNA"/>
</dbReference>
<dbReference type="RefSeq" id="WP_015954081.1">
    <property type="nucleotide sequence ID" value="NC_011729.1"/>
</dbReference>
<dbReference type="SMR" id="B7KF19"/>
<dbReference type="STRING" id="65393.PCC7424_2047"/>
<dbReference type="KEGG" id="cyc:PCC7424_2047"/>
<dbReference type="eggNOG" id="COG0002">
    <property type="taxonomic scope" value="Bacteria"/>
</dbReference>
<dbReference type="HOGENOM" id="CLU_006384_0_1_3"/>
<dbReference type="OrthoDB" id="9801289at2"/>
<dbReference type="UniPathway" id="UPA00068">
    <property type="reaction ID" value="UER00108"/>
</dbReference>
<dbReference type="Proteomes" id="UP000002384">
    <property type="component" value="Chromosome"/>
</dbReference>
<dbReference type="GO" id="GO:0005737">
    <property type="term" value="C:cytoplasm"/>
    <property type="evidence" value="ECO:0007669"/>
    <property type="project" value="UniProtKB-SubCell"/>
</dbReference>
<dbReference type="GO" id="GO:0003942">
    <property type="term" value="F:N-acetyl-gamma-glutamyl-phosphate reductase activity"/>
    <property type="evidence" value="ECO:0007669"/>
    <property type="project" value="UniProtKB-UniRule"/>
</dbReference>
<dbReference type="GO" id="GO:0051287">
    <property type="term" value="F:NAD binding"/>
    <property type="evidence" value="ECO:0007669"/>
    <property type="project" value="InterPro"/>
</dbReference>
<dbReference type="GO" id="GO:0070401">
    <property type="term" value="F:NADP+ binding"/>
    <property type="evidence" value="ECO:0007669"/>
    <property type="project" value="InterPro"/>
</dbReference>
<dbReference type="GO" id="GO:0006526">
    <property type="term" value="P:L-arginine biosynthetic process"/>
    <property type="evidence" value="ECO:0007669"/>
    <property type="project" value="UniProtKB-UniRule"/>
</dbReference>
<dbReference type="CDD" id="cd23934">
    <property type="entry name" value="AGPR_1_C"/>
    <property type="match status" value="1"/>
</dbReference>
<dbReference type="CDD" id="cd17895">
    <property type="entry name" value="AGPR_1_N"/>
    <property type="match status" value="1"/>
</dbReference>
<dbReference type="FunFam" id="3.30.360.10:FF:000014">
    <property type="entry name" value="N-acetyl-gamma-glutamyl-phosphate reductase"/>
    <property type="match status" value="1"/>
</dbReference>
<dbReference type="Gene3D" id="3.30.360.10">
    <property type="entry name" value="Dihydrodipicolinate Reductase, domain 2"/>
    <property type="match status" value="1"/>
</dbReference>
<dbReference type="Gene3D" id="3.40.50.720">
    <property type="entry name" value="NAD(P)-binding Rossmann-like Domain"/>
    <property type="match status" value="1"/>
</dbReference>
<dbReference type="HAMAP" id="MF_00150">
    <property type="entry name" value="ArgC_type1"/>
    <property type="match status" value="1"/>
</dbReference>
<dbReference type="InterPro" id="IPR023013">
    <property type="entry name" value="AGPR_AS"/>
</dbReference>
<dbReference type="InterPro" id="IPR000706">
    <property type="entry name" value="AGPR_type-1"/>
</dbReference>
<dbReference type="InterPro" id="IPR036291">
    <property type="entry name" value="NAD(P)-bd_dom_sf"/>
</dbReference>
<dbReference type="InterPro" id="IPR050085">
    <property type="entry name" value="NAGSA_dehydrogenase"/>
</dbReference>
<dbReference type="InterPro" id="IPR000534">
    <property type="entry name" value="Semialdehyde_DH_NAD-bd"/>
</dbReference>
<dbReference type="NCBIfam" id="TIGR01850">
    <property type="entry name" value="argC"/>
    <property type="match status" value="1"/>
</dbReference>
<dbReference type="PANTHER" id="PTHR32338:SF10">
    <property type="entry name" value="N-ACETYL-GAMMA-GLUTAMYL-PHOSPHATE REDUCTASE, CHLOROPLASTIC-RELATED"/>
    <property type="match status" value="1"/>
</dbReference>
<dbReference type="PANTHER" id="PTHR32338">
    <property type="entry name" value="N-ACETYL-GAMMA-GLUTAMYL-PHOSPHATE REDUCTASE, CHLOROPLASTIC-RELATED-RELATED"/>
    <property type="match status" value="1"/>
</dbReference>
<dbReference type="Pfam" id="PF01118">
    <property type="entry name" value="Semialdhyde_dh"/>
    <property type="match status" value="1"/>
</dbReference>
<dbReference type="Pfam" id="PF22698">
    <property type="entry name" value="Semialdhyde_dhC_1"/>
    <property type="match status" value="1"/>
</dbReference>
<dbReference type="SMART" id="SM00859">
    <property type="entry name" value="Semialdhyde_dh"/>
    <property type="match status" value="1"/>
</dbReference>
<dbReference type="SUPFAM" id="SSF55347">
    <property type="entry name" value="Glyceraldehyde-3-phosphate dehydrogenase-like, C-terminal domain"/>
    <property type="match status" value="1"/>
</dbReference>
<dbReference type="SUPFAM" id="SSF51735">
    <property type="entry name" value="NAD(P)-binding Rossmann-fold domains"/>
    <property type="match status" value="1"/>
</dbReference>
<dbReference type="PROSITE" id="PS01224">
    <property type="entry name" value="ARGC"/>
    <property type="match status" value="1"/>
</dbReference>
<feature type="chain" id="PRO_1000118054" description="N-acetyl-gamma-glutamyl-phosphate reductase">
    <location>
        <begin position="1"/>
        <end position="352"/>
    </location>
</feature>
<feature type="active site" evidence="1">
    <location>
        <position position="155"/>
    </location>
</feature>
<sequence>MGDTEQIPVGIIGASGYGGVQLVRLLIEHPNVEIVYLGGDSSAGKPYSDIYPHLFHCVNQPVEAIDIDEIASRCQVVFLGLPNGIACDLAPKLLEKGCKVLDLSADYRFRNLETYSTWYKKDRTDQAIAVRSVYGLPELYQQQIKESQLIGCPGCYPTASLLALAPLLKQGLIVPETAIIDAKSGTSGAGRQAKINALLAEADGSLGAYGVAKHRHTPEIEEVCSDLAGHEVTVQFTPHLIPMIRGILATVYATLRDPGLVREDLITIYNAFYRSSPFVKILPNGIYPQTKWACGTNLCYLGIEVDPRTDRVIVMSAIDNLIKGQAGQAVQCLNLMMGWEETLGLPQLCFYP</sequence>
<name>ARGC_GLOC7</name>
<keyword id="KW-0028">Amino-acid biosynthesis</keyword>
<keyword id="KW-0055">Arginine biosynthesis</keyword>
<keyword id="KW-0963">Cytoplasm</keyword>
<keyword id="KW-0521">NADP</keyword>
<keyword id="KW-0560">Oxidoreductase</keyword>
<keyword id="KW-1185">Reference proteome</keyword>
<comment type="function">
    <text evidence="1">Catalyzes the NADPH-dependent reduction of N-acetyl-5-glutamyl phosphate to yield N-acetyl-L-glutamate 5-semialdehyde.</text>
</comment>
<comment type="catalytic activity">
    <reaction evidence="1">
        <text>N-acetyl-L-glutamate 5-semialdehyde + phosphate + NADP(+) = N-acetyl-L-glutamyl 5-phosphate + NADPH + H(+)</text>
        <dbReference type="Rhea" id="RHEA:21588"/>
        <dbReference type="ChEBI" id="CHEBI:15378"/>
        <dbReference type="ChEBI" id="CHEBI:29123"/>
        <dbReference type="ChEBI" id="CHEBI:43474"/>
        <dbReference type="ChEBI" id="CHEBI:57783"/>
        <dbReference type="ChEBI" id="CHEBI:57936"/>
        <dbReference type="ChEBI" id="CHEBI:58349"/>
        <dbReference type="EC" id="1.2.1.38"/>
    </reaction>
</comment>
<comment type="pathway">
    <text evidence="1">Amino-acid biosynthesis; L-arginine biosynthesis; N(2)-acetyl-L-ornithine from L-glutamate: step 3/4.</text>
</comment>
<comment type="subcellular location">
    <subcellularLocation>
        <location evidence="1">Cytoplasm</location>
    </subcellularLocation>
</comment>
<comment type="similarity">
    <text evidence="1">Belongs to the NAGSA dehydrogenase family. Type 1 subfamily.</text>
</comment>
<reference key="1">
    <citation type="journal article" date="2011" name="MBio">
        <title>Novel metabolic attributes of the genus Cyanothece, comprising a group of unicellular nitrogen-fixing Cyanobacteria.</title>
        <authorList>
            <person name="Bandyopadhyay A."/>
            <person name="Elvitigala T."/>
            <person name="Welsh E."/>
            <person name="Stockel J."/>
            <person name="Liberton M."/>
            <person name="Min H."/>
            <person name="Sherman L.A."/>
            <person name="Pakrasi H.B."/>
        </authorList>
    </citation>
    <scope>NUCLEOTIDE SEQUENCE [LARGE SCALE GENOMIC DNA]</scope>
    <source>
        <strain>PCC 7424</strain>
    </source>
</reference>
<protein>
    <recommendedName>
        <fullName evidence="1">N-acetyl-gamma-glutamyl-phosphate reductase</fullName>
        <shortName evidence="1">AGPR</shortName>
        <ecNumber evidence="1">1.2.1.38</ecNumber>
    </recommendedName>
    <alternativeName>
        <fullName evidence="1">N-acetyl-glutamate semialdehyde dehydrogenase</fullName>
        <shortName evidence="1">NAGSA dehydrogenase</shortName>
    </alternativeName>
</protein>